<comment type="similarity">
    <text evidence="1">Belongs to the UPF0178 family.</text>
</comment>
<gene>
    <name type="ordered locus">Rsph17025_3122</name>
</gene>
<protein>
    <recommendedName>
        <fullName evidence="1">UPF0178 protein Rsph17025_3122</fullName>
    </recommendedName>
</protein>
<feature type="chain" id="PRO_1000014439" description="UPF0178 protein Rsph17025_3122">
    <location>
        <begin position="1"/>
        <end position="161"/>
    </location>
</feature>
<evidence type="ECO:0000255" key="1">
    <source>
        <dbReference type="HAMAP-Rule" id="MF_00489"/>
    </source>
</evidence>
<dbReference type="EMBL" id="CP000661">
    <property type="protein sequence ID" value="ABP72006.1"/>
    <property type="molecule type" value="Genomic_DNA"/>
</dbReference>
<dbReference type="STRING" id="349102.Rsph17025_3122"/>
<dbReference type="KEGG" id="rsq:Rsph17025_3122"/>
<dbReference type="eggNOG" id="COG1671">
    <property type="taxonomic scope" value="Bacteria"/>
</dbReference>
<dbReference type="HOGENOM" id="CLU_106619_2_1_5"/>
<dbReference type="BioCyc" id="RSPH349102:G1G8M-3225-MONOMER"/>
<dbReference type="HAMAP" id="MF_00489">
    <property type="entry name" value="UPF0178"/>
    <property type="match status" value="1"/>
</dbReference>
<dbReference type="InterPro" id="IPR003791">
    <property type="entry name" value="UPF0178"/>
</dbReference>
<dbReference type="NCBIfam" id="NF001095">
    <property type="entry name" value="PRK00124.1"/>
    <property type="match status" value="1"/>
</dbReference>
<dbReference type="PANTHER" id="PTHR35146">
    <property type="entry name" value="UPF0178 PROTEIN YAII"/>
    <property type="match status" value="1"/>
</dbReference>
<dbReference type="PANTHER" id="PTHR35146:SF1">
    <property type="entry name" value="UPF0178 PROTEIN YAII"/>
    <property type="match status" value="1"/>
</dbReference>
<dbReference type="Pfam" id="PF02639">
    <property type="entry name" value="DUF188"/>
    <property type="match status" value="1"/>
</dbReference>
<reference key="1">
    <citation type="submission" date="2007-04" db="EMBL/GenBank/DDBJ databases">
        <title>Complete sequence of chromosome of Rhodobacter sphaeroides ATCC 17025.</title>
        <authorList>
            <consortium name="US DOE Joint Genome Institute"/>
            <person name="Copeland A."/>
            <person name="Lucas S."/>
            <person name="Lapidus A."/>
            <person name="Barry K."/>
            <person name="Detter J.C."/>
            <person name="Glavina del Rio T."/>
            <person name="Hammon N."/>
            <person name="Israni S."/>
            <person name="Dalin E."/>
            <person name="Tice H."/>
            <person name="Pitluck S."/>
            <person name="Chertkov O."/>
            <person name="Brettin T."/>
            <person name="Bruce D."/>
            <person name="Han C."/>
            <person name="Schmutz J."/>
            <person name="Larimer F."/>
            <person name="Land M."/>
            <person name="Hauser L."/>
            <person name="Kyrpides N."/>
            <person name="Kim E."/>
            <person name="Richardson P."/>
            <person name="Mackenzie C."/>
            <person name="Choudhary M."/>
            <person name="Donohue T.J."/>
            <person name="Kaplan S."/>
        </authorList>
    </citation>
    <scope>NUCLEOTIDE SEQUENCE [LARGE SCALE GENOMIC DNA]</scope>
    <source>
        <strain>ATCC 17025 / ATH 2.4.3</strain>
    </source>
</reference>
<sequence length="161" mass="16865">MAELYIDADACPVKAEAERVAVRHGARMYLVSNGGIRPPAHPLVESVFVPEGPDAADKWIADRAGTGDVVVTSDIPLAAKAVAAGALVVKPNGETLTTANIGNALATRDLMADLRSADPFRQGGGRPFSRADRSRFLDALERAMRKAAEAARDAGQDEAGT</sequence>
<accession>A4WX92</accession>
<proteinExistence type="inferred from homology"/>
<name>Y3122_CERS5</name>
<organism>
    <name type="scientific">Cereibacter sphaeroides (strain ATCC 17025 / ATH 2.4.3)</name>
    <name type="common">Rhodobacter sphaeroides</name>
    <dbReference type="NCBI Taxonomy" id="349102"/>
    <lineage>
        <taxon>Bacteria</taxon>
        <taxon>Pseudomonadati</taxon>
        <taxon>Pseudomonadota</taxon>
        <taxon>Alphaproteobacteria</taxon>
        <taxon>Rhodobacterales</taxon>
        <taxon>Paracoccaceae</taxon>
        <taxon>Cereibacter</taxon>
    </lineage>
</organism>